<reference key="1">
    <citation type="journal article" date="2008" name="J. Bacteriol.">
        <title>Genome sequence of the streptomycin-producing microorganism Streptomyces griseus IFO 13350.</title>
        <authorList>
            <person name="Ohnishi Y."/>
            <person name="Ishikawa J."/>
            <person name="Hara H."/>
            <person name="Suzuki H."/>
            <person name="Ikenoya M."/>
            <person name="Ikeda H."/>
            <person name="Yamashita A."/>
            <person name="Hattori M."/>
            <person name="Horinouchi S."/>
        </authorList>
    </citation>
    <scope>NUCLEOTIDE SEQUENCE [LARGE SCALE GENOMIC DNA]</scope>
    <source>
        <strain>JCM 4626 / CBS 651.72 / NBRC 13350 / KCC S-0626 / ISP 5235</strain>
    </source>
</reference>
<proteinExistence type="inferred from homology"/>
<accession>B1W5A8</accession>
<sequence>MSDSKLAGQFFDAAIGLLTRVRDEESDSIAAAGAAVADTVASGGRLFAFGAGHSSLAAQDVVYRAGGLALMNLLTVPGAVGVDVMPATLGSALERVDGLASAVLDSSPATAGDLLVIVSLSGRNALPVEMAQNARALGLKVIGLTSVAYAENTRSRHASGGFLRDHCDIVLDSKIAIGDAELTAPGVEAPFAPASTVVTSAIMQAMLAAAVEQLVARGIEPPMLRSGNVDGGHEWNGRVMTEYRDRIFYRH</sequence>
<comment type="similarity">
    <text evidence="1">Belongs to the UPF0309 family.</text>
</comment>
<protein>
    <recommendedName>
        <fullName evidence="1">UPF0309 protein SGR_3073</fullName>
    </recommendedName>
</protein>
<dbReference type="EMBL" id="AP009493">
    <property type="protein sequence ID" value="BAG19902.1"/>
    <property type="molecule type" value="Genomic_DNA"/>
</dbReference>
<dbReference type="RefSeq" id="WP_003967173.1">
    <property type="nucleotide sequence ID" value="NC_010572.1"/>
</dbReference>
<dbReference type="SMR" id="B1W5A8"/>
<dbReference type="KEGG" id="sgr:SGR_3073"/>
<dbReference type="eggNOG" id="COG4821">
    <property type="taxonomic scope" value="Bacteria"/>
</dbReference>
<dbReference type="HOGENOM" id="CLU_089975_0_0_11"/>
<dbReference type="Proteomes" id="UP000001685">
    <property type="component" value="Chromosome"/>
</dbReference>
<dbReference type="GO" id="GO:0097367">
    <property type="term" value="F:carbohydrate derivative binding"/>
    <property type="evidence" value="ECO:0007669"/>
    <property type="project" value="InterPro"/>
</dbReference>
<dbReference type="GO" id="GO:1901135">
    <property type="term" value="P:carbohydrate derivative metabolic process"/>
    <property type="evidence" value="ECO:0007669"/>
    <property type="project" value="InterPro"/>
</dbReference>
<dbReference type="CDD" id="cd05013">
    <property type="entry name" value="SIS_RpiR"/>
    <property type="match status" value="1"/>
</dbReference>
<dbReference type="Gene3D" id="3.40.50.10490">
    <property type="entry name" value="Glucose-6-phosphate isomerase like protein, domain 1"/>
    <property type="match status" value="1"/>
</dbReference>
<dbReference type="HAMAP" id="MF_01240">
    <property type="entry name" value="UPF0309"/>
    <property type="match status" value="1"/>
</dbReference>
<dbReference type="InterPro" id="IPR035472">
    <property type="entry name" value="RpiR-like_SIS"/>
</dbReference>
<dbReference type="InterPro" id="IPR001347">
    <property type="entry name" value="SIS_dom"/>
</dbReference>
<dbReference type="InterPro" id="IPR046348">
    <property type="entry name" value="SIS_dom_sf"/>
</dbReference>
<dbReference type="InterPro" id="IPR050099">
    <property type="entry name" value="SIS_GmhA/DiaA_subfam"/>
</dbReference>
<dbReference type="InterPro" id="IPR022951">
    <property type="entry name" value="UPF0309"/>
</dbReference>
<dbReference type="NCBIfam" id="NF002805">
    <property type="entry name" value="PRK02947.1"/>
    <property type="match status" value="1"/>
</dbReference>
<dbReference type="PANTHER" id="PTHR30390:SF7">
    <property type="entry name" value="PHOSPHOHEPTOSE ISOMERASE"/>
    <property type="match status" value="1"/>
</dbReference>
<dbReference type="PANTHER" id="PTHR30390">
    <property type="entry name" value="SEDOHEPTULOSE 7-PHOSPHATE ISOMERASE / DNAA INITIATOR-ASSOCIATING FACTOR FOR REPLICATION INITIATION"/>
    <property type="match status" value="1"/>
</dbReference>
<dbReference type="Pfam" id="PF13580">
    <property type="entry name" value="SIS_2"/>
    <property type="match status" value="1"/>
</dbReference>
<dbReference type="SUPFAM" id="SSF53697">
    <property type="entry name" value="SIS domain"/>
    <property type="match status" value="1"/>
</dbReference>
<dbReference type="PROSITE" id="PS51464">
    <property type="entry name" value="SIS"/>
    <property type="match status" value="1"/>
</dbReference>
<feature type="chain" id="PRO_1000139748" description="UPF0309 protein SGR_3073">
    <location>
        <begin position="1"/>
        <end position="251"/>
    </location>
</feature>
<feature type="domain" description="SIS" evidence="1">
    <location>
        <begin position="36"/>
        <end position="221"/>
    </location>
</feature>
<gene>
    <name type="ordered locus">SGR_3073</name>
</gene>
<evidence type="ECO:0000255" key="1">
    <source>
        <dbReference type="HAMAP-Rule" id="MF_01240"/>
    </source>
</evidence>
<organism>
    <name type="scientific">Streptomyces griseus subsp. griseus (strain JCM 4626 / CBS 651.72 / NBRC 13350 / KCC S-0626 / ISP 5235)</name>
    <dbReference type="NCBI Taxonomy" id="455632"/>
    <lineage>
        <taxon>Bacteria</taxon>
        <taxon>Bacillati</taxon>
        <taxon>Actinomycetota</taxon>
        <taxon>Actinomycetes</taxon>
        <taxon>Kitasatosporales</taxon>
        <taxon>Streptomycetaceae</taxon>
        <taxon>Streptomyces</taxon>
    </lineage>
</organism>
<name>Y3073_STRGG</name>